<feature type="chain" id="PRO_0000374908" description="Ribosomal protein uS12 methylthiotransferase RimO">
    <location>
        <begin position="1"/>
        <end position="437"/>
    </location>
</feature>
<feature type="domain" description="MTTase N-terminal" evidence="1">
    <location>
        <begin position="4"/>
        <end position="114"/>
    </location>
</feature>
<feature type="domain" description="Radical SAM core" evidence="2">
    <location>
        <begin position="131"/>
        <end position="369"/>
    </location>
</feature>
<feature type="domain" description="TRAM" evidence="1">
    <location>
        <begin position="372"/>
        <end position="437"/>
    </location>
</feature>
<feature type="binding site" evidence="1">
    <location>
        <position position="13"/>
    </location>
    <ligand>
        <name>[4Fe-4S] cluster</name>
        <dbReference type="ChEBI" id="CHEBI:49883"/>
        <label>1</label>
    </ligand>
</feature>
<feature type="binding site" evidence="1">
    <location>
        <position position="49"/>
    </location>
    <ligand>
        <name>[4Fe-4S] cluster</name>
        <dbReference type="ChEBI" id="CHEBI:49883"/>
        <label>1</label>
    </ligand>
</feature>
<feature type="binding site" evidence="1">
    <location>
        <position position="78"/>
    </location>
    <ligand>
        <name>[4Fe-4S] cluster</name>
        <dbReference type="ChEBI" id="CHEBI:49883"/>
        <label>1</label>
    </ligand>
</feature>
<feature type="binding site" evidence="1">
    <location>
        <position position="145"/>
    </location>
    <ligand>
        <name>[4Fe-4S] cluster</name>
        <dbReference type="ChEBI" id="CHEBI:49883"/>
        <label>2</label>
        <note>4Fe-4S-S-AdoMet</note>
    </ligand>
</feature>
<feature type="binding site" evidence="1">
    <location>
        <position position="149"/>
    </location>
    <ligand>
        <name>[4Fe-4S] cluster</name>
        <dbReference type="ChEBI" id="CHEBI:49883"/>
        <label>2</label>
        <note>4Fe-4S-S-AdoMet</note>
    </ligand>
</feature>
<feature type="binding site" evidence="1">
    <location>
        <position position="152"/>
    </location>
    <ligand>
        <name>[4Fe-4S] cluster</name>
        <dbReference type="ChEBI" id="CHEBI:49883"/>
        <label>2</label>
        <note>4Fe-4S-S-AdoMet</note>
    </ligand>
</feature>
<gene>
    <name evidence="1" type="primary">rimO</name>
    <name type="ordered locus">Oant_3627</name>
</gene>
<keyword id="KW-0004">4Fe-4S</keyword>
<keyword id="KW-0963">Cytoplasm</keyword>
<keyword id="KW-0408">Iron</keyword>
<keyword id="KW-0411">Iron-sulfur</keyword>
<keyword id="KW-0479">Metal-binding</keyword>
<keyword id="KW-1185">Reference proteome</keyword>
<keyword id="KW-0949">S-adenosyl-L-methionine</keyword>
<keyword id="KW-0808">Transferase</keyword>
<proteinExistence type="inferred from homology"/>
<comment type="function">
    <text evidence="1">Catalyzes the methylthiolation of an aspartic acid residue of ribosomal protein uS12.</text>
</comment>
<comment type="catalytic activity">
    <reaction evidence="1">
        <text>L-aspartate(89)-[ribosomal protein uS12]-hydrogen + (sulfur carrier)-SH + AH2 + 2 S-adenosyl-L-methionine = 3-methylsulfanyl-L-aspartate(89)-[ribosomal protein uS12]-hydrogen + (sulfur carrier)-H + 5'-deoxyadenosine + L-methionine + A + S-adenosyl-L-homocysteine + 2 H(+)</text>
        <dbReference type="Rhea" id="RHEA:37087"/>
        <dbReference type="Rhea" id="RHEA-COMP:10460"/>
        <dbReference type="Rhea" id="RHEA-COMP:10461"/>
        <dbReference type="Rhea" id="RHEA-COMP:14737"/>
        <dbReference type="Rhea" id="RHEA-COMP:14739"/>
        <dbReference type="ChEBI" id="CHEBI:13193"/>
        <dbReference type="ChEBI" id="CHEBI:15378"/>
        <dbReference type="ChEBI" id="CHEBI:17319"/>
        <dbReference type="ChEBI" id="CHEBI:17499"/>
        <dbReference type="ChEBI" id="CHEBI:29917"/>
        <dbReference type="ChEBI" id="CHEBI:29961"/>
        <dbReference type="ChEBI" id="CHEBI:57844"/>
        <dbReference type="ChEBI" id="CHEBI:57856"/>
        <dbReference type="ChEBI" id="CHEBI:59789"/>
        <dbReference type="ChEBI" id="CHEBI:64428"/>
        <dbReference type="ChEBI" id="CHEBI:73599"/>
        <dbReference type="EC" id="2.8.4.4"/>
    </reaction>
</comment>
<comment type="cofactor">
    <cofactor evidence="1">
        <name>[4Fe-4S] cluster</name>
        <dbReference type="ChEBI" id="CHEBI:49883"/>
    </cofactor>
    <text evidence="1">Binds 2 [4Fe-4S] clusters. One cluster is coordinated with 3 cysteines and an exchangeable S-adenosyl-L-methionine.</text>
</comment>
<comment type="subcellular location">
    <subcellularLocation>
        <location evidence="1">Cytoplasm</location>
    </subcellularLocation>
</comment>
<comment type="similarity">
    <text evidence="1">Belongs to the methylthiotransferase family. RimO subfamily.</text>
</comment>
<organism>
    <name type="scientific">Brucella anthropi (strain ATCC 49188 / DSM 6882 / CCUG 24695 / JCM 21032 / LMG 3331 / NBRC 15819 / NCTC 12168 / Alc 37)</name>
    <name type="common">Ochrobactrum anthropi</name>
    <dbReference type="NCBI Taxonomy" id="439375"/>
    <lineage>
        <taxon>Bacteria</taxon>
        <taxon>Pseudomonadati</taxon>
        <taxon>Pseudomonadota</taxon>
        <taxon>Alphaproteobacteria</taxon>
        <taxon>Hyphomicrobiales</taxon>
        <taxon>Brucellaceae</taxon>
        <taxon>Brucella/Ochrobactrum group</taxon>
        <taxon>Brucella</taxon>
    </lineage>
</organism>
<name>RIMO_BRUA4</name>
<protein>
    <recommendedName>
        <fullName evidence="1">Ribosomal protein uS12 methylthiotransferase RimO</fullName>
        <shortName evidence="1">uS12 MTTase</shortName>
        <shortName evidence="1">uS12 methylthiotransferase</shortName>
        <ecNumber evidence="1">2.8.4.4</ecNumber>
    </recommendedName>
    <alternativeName>
        <fullName evidence="1">Ribosomal protein uS12 (aspartate-C(3))-methylthiotransferase</fullName>
    </alternativeName>
    <alternativeName>
        <fullName evidence="1">Ribosome maturation factor RimO</fullName>
    </alternativeName>
</protein>
<accession>A6X529</accession>
<dbReference type="EC" id="2.8.4.4" evidence="1"/>
<dbReference type="EMBL" id="CP000759">
    <property type="protein sequence ID" value="ABS16333.1"/>
    <property type="molecule type" value="Genomic_DNA"/>
</dbReference>
<dbReference type="RefSeq" id="WP_012093012.1">
    <property type="nucleotide sequence ID" value="NC_009668.1"/>
</dbReference>
<dbReference type="SMR" id="A6X529"/>
<dbReference type="STRING" id="439375.Oant_3627"/>
<dbReference type="KEGG" id="oan:Oant_3627"/>
<dbReference type="PATRIC" id="fig|439375.7.peg.3788"/>
<dbReference type="eggNOG" id="COG0621">
    <property type="taxonomic scope" value="Bacteria"/>
</dbReference>
<dbReference type="HOGENOM" id="CLU_018697_0_0_5"/>
<dbReference type="PhylomeDB" id="A6X529"/>
<dbReference type="Proteomes" id="UP000002301">
    <property type="component" value="Chromosome 2"/>
</dbReference>
<dbReference type="GO" id="GO:0005829">
    <property type="term" value="C:cytosol"/>
    <property type="evidence" value="ECO:0007669"/>
    <property type="project" value="TreeGrafter"/>
</dbReference>
<dbReference type="GO" id="GO:0051539">
    <property type="term" value="F:4 iron, 4 sulfur cluster binding"/>
    <property type="evidence" value="ECO:0007669"/>
    <property type="project" value="UniProtKB-UniRule"/>
</dbReference>
<dbReference type="GO" id="GO:0035599">
    <property type="term" value="F:aspartic acid methylthiotransferase activity"/>
    <property type="evidence" value="ECO:0007669"/>
    <property type="project" value="TreeGrafter"/>
</dbReference>
<dbReference type="GO" id="GO:0046872">
    <property type="term" value="F:metal ion binding"/>
    <property type="evidence" value="ECO:0007669"/>
    <property type="project" value="UniProtKB-KW"/>
</dbReference>
<dbReference type="GO" id="GO:0103039">
    <property type="term" value="F:protein methylthiotransferase activity"/>
    <property type="evidence" value="ECO:0007669"/>
    <property type="project" value="UniProtKB-EC"/>
</dbReference>
<dbReference type="GO" id="GO:0006400">
    <property type="term" value="P:tRNA modification"/>
    <property type="evidence" value="ECO:0007669"/>
    <property type="project" value="InterPro"/>
</dbReference>
<dbReference type="CDD" id="cd01335">
    <property type="entry name" value="Radical_SAM"/>
    <property type="match status" value="1"/>
</dbReference>
<dbReference type="FunFam" id="3.40.50.12160:FF:000002">
    <property type="entry name" value="Ribosomal protein S12 methylthiotransferase RimO"/>
    <property type="match status" value="1"/>
</dbReference>
<dbReference type="FunFam" id="3.80.30.20:FF:000001">
    <property type="entry name" value="tRNA-2-methylthio-N(6)-dimethylallyladenosine synthase 2"/>
    <property type="match status" value="1"/>
</dbReference>
<dbReference type="Gene3D" id="3.40.50.12160">
    <property type="entry name" value="Methylthiotransferase, N-terminal domain"/>
    <property type="match status" value="1"/>
</dbReference>
<dbReference type="Gene3D" id="2.40.50.140">
    <property type="entry name" value="Nucleic acid-binding proteins"/>
    <property type="match status" value="1"/>
</dbReference>
<dbReference type="Gene3D" id="3.80.30.20">
    <property type="entry name" value="tm_1862 like domain"/>
    <property type="match status" value="1"/>
</dbReference>
<dbReference type="HAMAP" id="MF_01865">
    <property type="entry name" value="MTTase_RimO"/>
    <property type="match status" value="1"/>
</dbReference>
<dbReference type="InterPro" id="IPR006638">
    <property type="entry name" value="Elp3/MiaA/NifB-like_rSAM"/>
</dbReference>
<dbReference type="InterPro" id="IPR005839">
    <property type="entry name" value="Methylthiotransferase"/>
</dbReference>
<dbReference type="InterPro" id="IPR020612">
    <property type="entry name" value="Methylthiotransferase_CS"/>
</dbReference>
<dbReference type="InterPro" id="IPR013848">
    <property type="entry name" value="Methylthiotransferase_N"/>
</dbReference>
<dbReference type="InterPro" id="IPR038135">
    <property type="entry name" value="Methylthiotransferase_N_sf"/>
</dbReference>
<dbReference type="InterPro" id="IPR012340">
    <property type="entry name" value="NA-bd_OB-fold"/>
</dbReference>
<dbReference type="InterPro" id="IPR005840">
    <property type="entry name" value="Ribosomal_uS12_MeSTrfase_RimO"/>
</dbReference>
<dbReference type="InterPro" id="IPR007197">
    <property type="entry name" value="rSAM"/>
</dbReference>
<dbReference type="InterPro" id="IPR023404">
    <property type="entry name" value="rSAM_horseshoe"/>
</dbReference>
<dbReference type="InterPro" id="IPR002792">
    <property type="entry name" value="TRAM_dom"/>
</dbReference>
<dbReference type="NCBIfam" id="TIGR01125">
    <property type="entry name" value="30S ribosomal protein S12 methylthiotransferase RimO"/>
    <property type="match status" value="1"/>
</dbReference>
<dbReference type="NCBIfam" id="TIGR00089">
    <property type="entry name" value="MiaB/RimO family radical SAM methylthiotransferase"/>
    <property type="match status" value="1"/>
</dbReference>
<dbReference type="PANTHER" id="PTHR43837">
    <property type="entry name" value="RIBOSOMAL PROTEIN S12 METHYLTHIOTRANSFERASE RIMO"/>
    <property type="match status" value="1"/>
</dbReference>
<dbReference type="PANTHER" id="PTHR43837:SF1">
    <property type="entry name" value="RIBOSOMAL PROTEIN US12 METHYLTHIOTRANSFERASE RIMO"/>
    <property type="match status" value="1"/>
</dbReference>
<dbReference type="Pfam" id="PF04055">
    <property type="entry name" value="Radical_SAM"/>
    <property type="match status" value="1"/>
</dbReference>
<dbReference type="Pfam" id="PF18693">
    <property type="entry name" value="TRAM_2"/>
    <property type="match status" value="1"/>
</dbReference>
<dbReference type="Pfam" id="PF00919">
    <property type="entry name" value="UPF0004"/>
    <property type="match status" value="1"/>
</dbReference>
<dbReference type="SFLD" id="SFLDG01082">
    <property type="entry name" value="B12-binding_domain_containing"/>
    <property type="match status" value="1"/>
</dbReference>
<dbReference type="SFLD" id="SFLDG01061">
    <property type="entry name" value="methylthiotransferase"/>
    <property type="match status" value="1"/>
</dbReference>
<dbReference type="SFLD" id="SFLDF00274">
    <property type="entry name" value="ribosomal_protein_S12_methylth"/>
    <property type="match status" value="1"/>
</dbReference>
<dbReference type="SMART" id="SM00729">
    <property type="entry name" value="Elp3"/>
    <property type="match status" value="1"/>
</dbReference>
<dbReference type="SUPFAM" id="SSF102114">
    <property type="entry name" value="Radical SAM enzymes"/>
    <property type="match status" value="1"/>
</dbReference>
<dbReference type="PROSITE" id="PS51449">
    <property type="entry name" value="MTTASE_N"/>
    <property type="match status" value="1"/>
</dbReference>
<dbReference type="PROSITE" id="PS01278">
    <property type="entry name" value="MTTASE_RADICAL"/>
    <property type="match status" value="1"/>
</dbReference>
<dbReference type="PROSITE" id="PS51918">
    <property type="entry name" value="RADICAL_SAM"/>
    <property type="match status" value="1"/>
</dbReference>
<dbReference type="PROSITE" id="PS50926">
    <property type="entry name" value="TRAM"/>
    <property type="match status" value="1"/>
</dbReference>
<evidence type="ECO:0000255" key="1">
    <source>
        <dbReference type="HAMAP-Rule" id="MF_01865"/>
    </source>
</evidence>
<evidence type="ECO:0000255" key="2">
    <source>
        <dbReference type="PROSITE-ProRule" id="PRU01266"/>
    </source>
</evidence>
<sequence length="437" mass="48770">MSAPRVSFVSLGCPKALVDSERIITSLRSEGYEISRKHDGADLVIVNTCGFLDSARDESLDAIGLALNENGKVIVTGCLGAEPDVIRERHPNVLAITGPQAYESVMSAVHEAVPPAHDPFVDLVPPQGVKLTPRHYAYLKISEGCSNRCSFCIIPALRGDLVSRPIDSVLREAEKLVNAGVKEILVISQDTSAYGLDIKYQEAMWQDRTVRTKFLDLSRELGDMGVWVRMHYVYPYPHVDEVIPLMAEGKILPYLDIPFQHASPAVLKNMRRPAHQEKTSRRIQAWRETCPDLAVRSTFIVGYPGETEEDFEILLDWLDEAKIERAGCFKYEPVKGAKANDLGLEQVPEEIKEARWHRFMAKQQQISTNLLKKKVGKRLPVIIDEANGTIGKGRTRYDAPEIDGSVHIQSRRPLRVGDIVTVKIEASDAYDLHGIAV</sequence>
<reference key="1">
    <citation type="journal article" date="2011" name="J. Bacteriol.">
        <title>Genome of Ochrobactrum anthropi ATCC 49188 T, a versatile opportunistic pathogen and symbiont of several eukaryotic hosts.</title>
        <authorList>
            <person name="Chain P.S."/>
            <person name="Lang D.M."/>
            <person name="Comerci D.J."/>
            <person name="Malfatti S.A."/>
            <person name="Vergez L.M."/>
            <person name="Shin M."/>
            <person name="Ugalde R.A."/>
            <person name="Garcia E."/>
            <person name="Tolmasky M.E."/>
        </authorList>
    </citation>
    <scope>NUCLEOTIDE SEQUENCE [LARGE SCALE GENOMIC DNA]</scope>
    <source>
        <strain>ATCC 49188 / DSM 6882 / CCUG 24695 / JCM 21032 / LMG 3331 / NBRC 15819 / NCTC 12168 / Alc 37</strain>
    </source>
</reference>